<organism>
    <name type="scientific">Roseobacter denitrificans (strain ATCC 33942 / OCh 114)</name>
    <name type="common">Erythrobacter sp. (strain OCh 114)</name>
    <name type="synonym">Roseobacter denitrificans</name>
    <dbReference type="NCBI Taxonomy" id="375451"/>
    <lineage>
        <taxon>Bacteria</taxon>
        <taxon>Pseudomonadati</taxon>
        <taxon>Pseudomonadota</taxon>
        <taxon>Alphaproteobacteria</taxon>
        <taxon>Rhodobacterales</taxon>
        <taxon>Roseobacteraceae</taxon>
        <taxon>Roseobacter</taxon>
    </lineage>
</organism>
<accession>Q169N4</accession>
<protein>
    <recommendedName>
        <fullName evidence="1">Translation initiation factor IF-1</fullName>
    </recommendedName>
</protein>
<reference key="1">
    <citation type="journal article" date="2007" name="J. Bacteriol.">
        <title>The complete genome sequence of Roseobacter denitrificans reveals a mixotrophic rather than photosynthetic metabolism.</title>
        <authorList>
            <person name="Swingley W.D."/>
            <person name="Sadekar S."/>
            <person name="Mastrian S.D."/>
            <person name="Matthies H.J."/>
            <person name="Hao J."/>
            <person name="Ramos H."/>
            <person name="Acharya C.R."/>
            <person name="Conrad A.L."/>
            <person name="Taylor H.L."/>
            <person name="Dejesa L.C."/>
            <person name="Shah M.K."/>
            <person name="O'Huallachain M.E."/>
            <person name="Lince M.T."/>
            <person name="Blankenship R.E."/>
            <person name="Beatty J.T."/>
            <person name="Touchman J.W."/>
        </authorList>
    </citation>
    <scope>NUCLEOTIDE SEQUENCE [LARGE SCALE GENOMIC DNA]</scope>
    <source>
        <strain>ATCC 33942 / OCh 114</strain>
    </source>
</reference>
<keyword id="KW-0963">Cytoplasm</keyword>
<keyword id="KW-0396">Initiation factor</keyword>
<keyword id="KW-0648">Protein biosynthesis</keyword>
<keyword id="KW-1185">Reference proteome</keyword>
<keyword id="KW-0694">RNA-binding</keyword>
<keyword id="KW-0699">rRNA-binding</keyword>
<evidence type="ECO:0000255" key="1">
    <source>
        <dbReference type="HAMAP-Rule" id="MF_00075"/>
    </source>
</evidence>
<feature type="chain" id="PRO_0000263862" description="Translation initiation factor IF-1">
    <location>
        <begin position="1"/>
        <end position="72"/>
    </location>
</feature>
<feature type="domain" description="S1-like" evidence="1">
    <location>
        <begin position="1"/>
        <end position="72"/>
    </location>
</feature>
<sequence>MAKEDTLEFPGVVKELLPNATFRVELENGHEIIAHTAGKMRKNRIRVLAGDKVQVEMTPYDLTKGRINYRFK</sequence>
<dbReference type="EMBL" id="CP000362">
    <property type="protein sequence ID" value="ABG31309.1"/>
    <property type="molecule type" value="Genomic_DNA"/>
</dbReference>
<dbReference type="RefSeq" id="WP_005978431.1">
    <property type="nucleotide sequence ID" value="NZ_FOOO01000005.1"/>
</dbReference>
<dbReference type="SMR" id="Q169N4"/>
<dbReference type="STRING" id="375451.RD1_1685"/>
<dbReference type="GeneID" id="93913627"/>
<dbReference type="KEGG" id="rde:RD1_1685"/>
<dbReference type="eggNOG" id="COG0361">
    <property type="taxonomic scope" value="Bacteria"/>
</dbReference>
<dbReference type="HOGENOM" id="CLU_151267_1_0_5"/>
<dbReference type="OrthoDB" id="9803250at2"/>
<dbReference type="Proteomes" id="UP000007029">
    <property type="component" value="Chromosome"/>
</dbReference>
<dbReference type="GO" id="GO:0005829">
    <property type="term" value="C:cytosol"/>
    <property type="evidence" value="ECO:0007669"/>
    <property type="project" value="TreeGrafter"/>
</dbReference>
<dbReference type="GO" id="GO:0043022">
    <property type="term" value="F:ribosome binding"/>
    <property type="evidence" value="ECO:0007669"/>
    <property type="project" value="UniProtKB-UniRule"/>
</dbReference>
<dbReference type="GO" id="GO:0019843">
    <property type="term" value="F:rRNA binding"/>
    <property type="evidence" value="ECO:0007669"/>
    <property type="project" value="UniProtKB-UniRule"/>
</dbReference>
<dbReference type="GO" id="GO:0003743">
    <property type="term" value="F:translation initiation factor activity"/>
    <property type="evidence" value="ECO:0007669"/>
    <property type="project" value="UniProtKB-UniRule"/>
</dbReference>
<dbReference type="CDD" id="cd04451">
    <property type="entry name" value="S1_IF1"/>
    <property type="match status" value="1"/>
</dbReference>
<dbReference type="FunFam" id="2.40.50.140:FF:000002">
    <property type="entry name" value="Translation initiation factor IF-1"/>
    <property type="match status" value="1"/>
</dbReference>
<dbReference type="Gene3D" id="2.40.50.140">
    <property type="entry name" value="Nucleic acid-binding proteins"/>
    <property type="match status" value="1"/>
</dbReference>
<dbReference type="HAMAP" id="MF_00075">
    <property type="entry name" value="IF_1"/>
    <property type="match status" value="1"/>
</dbReference>
<dbReference type="InterPro" id="IPR012340">
    <property type="entry name" value="NA-bd_OB-fold"/>
</dbReference>
<dbReference type="InterPro" id="IPR006196">
    <property type="entry name" value="RNA-binding_domain_S1_IF1"/>
</dbReference>
<dbReference type="InterPro" id="IPR003029">
    <property type="entry name" value="S1_domain"/>
</dbReference>
<dbReference type="InterPro" id="IPR004368">
    <property type="entry name" value="TIF_IF1"/>
</dbReference>
<dbReference type="NCBIfam" id="TIGR00008">
    <property type="entry name" value="infA"/>
    <property type="match status" value="1"/>
</dbReference>
<dbReference type="PANTHER" id="PTHR33370">
    <property type="entry name" value="TRANSLATION INITIATION FACTOR IF-1, CHLOROPLASTIC"/>
    <property type="match status" value="1"/>
</dbReference>
<dbReference type="PANTHER" id="PTHR33370:SF1">
    <property type="entry name" value="TRANSLATION INITIATION FACTOR IF-1, CHLOROPLASTIC"/>
    <property type="match status" value="1"/>
</dbReference>
<dbReference type="Pfam" id="PF01176">
    <property type="entry name" value="eIF-1a"/>
    <property type="match status" value="1"/>
</dbReference>
<dbReference type="SMART" id="SM00316">
    <property type="entry name" value="S1"/>
    <property type="match status" value="1"/>
</dbReference>
<dbReference type="SUPFAM" id="SSF50249">
    <property type="entry name" value="Nucleic acid-binding proteins"/>
    <property type="match status" value="1"/>
</dbReference>
<dbReference type="PROSITE" id="PS50832">
    <property type="entry name" value="S1_IF1_TYPE"/>
    <property type="match status" value="1"/>
</dbReference>
<gene>
    <name evidence="1" type="primary">infA</name>
    <name type="ordered locus">RD1_1685</name>
</gene>
<proteinExistence type="inferred from homology"/>
<comment type="function">
    <text evidence="1">One of the essential components for the initiation of protein synthesis. Stabilizes the binding of IF-2 and IF-3 on the 30S subunit to which N-formylmethionyl-tRNA(fMet) subsequently binds. Helps modulate mRNA selection, yielding the 30S pre-initiation complex (PIC). Upon addition of the 50S ribosomal subunit IF-1, IF-2 and IF-3 are released leaving the mature 70S translation initiation complex.</text>
</comment>
<comment type="subunit">
    <text evidence="1">Component of the 30S ribosomal translation pre-initiation complex which assembles on the 30S ribosome in the order IF-2 and IF-3, IF-1 and N-formylmethionyl-tRNA(fMet); mRNA recruitment can occur at any time during PIC assembly.</text>
</comment>
<comment type="subcellular location">
    <subcellularLocation>
        <location evidence="1">Cytoplasm</location>
    </subcellularLocation>
</comment>
<comment type="similarity">
    <text evidence="1">Belongs to the IF-1 family.</text>
</comment>
<name>IF1_ROSDO</name>